<organism>
    <name type="scientific">Salmonella paratyphi C (strain RKS4594)</name>
    <dbReference type="NCBI Taxonomy" id="476213"/>
    <lineage>
        <taxon>Bacteria</taxon>
        <taxon>Pseudomonadati</taxon>
        <taxon>Pseudomonadota</taxon>
        <taxon>Gammaproteobacteria</taxon>
        <taxon>Enterobacterales</taxon>
        <taxon>Enterobacteriaceae</taxon>
        <taxon>Salmonella</taxon>
    </lineage>
</organism>
<name>YBEY_SALPC</name>
<protein>
    <recommendedName>
        <fullName evidence="1">Endoribonuclease YbeY</fullName>
        <ecNumber evidence="1">3.1.-.-</ecNumber>
    </recommendedName>
</protein>
<feature type="chain" id="PRO_1000199992" description="Endoribonuclease YbeY">
    <location>
        <begin position="1"/>
        <end position="157"/>
    </location>
</feature>
<feature type="binding site" evidence="1">
    <location>
        <position position="114"/>
    </location>
    <ligand>
        <name>Zn(2+)</name>
        <dbReference type="ChEBI" id="CHEBI:29105"/>
        <note>catalytic</note>
    </ligand>
</feature>
<feature type="binding site" evidence="1">
    <location>
        <position position="118"/>
    </location>
    <ligand>
        <name>Zn(2+)</name>
        <dbReference type="ChEBI" id="CHEBI:29105"/>
        <note>catalytic</note>
    </ligand>
</feature>
<feature type="binding site" evidence="1">
    <location>
        <position position="124"/>
    </location>
    <ligand>
        <name>Zn(2+)</name>
        <dbReference type="ChEBI" id="CHEBI:29105"/>
        <note>catalytic</note>
    </ligand>
</feature>
<sequence>MSQVILDLQLACENHAGLPDEAQFQRWLDGVIPQFQEEAEVTIRLVDEAESHDLNLTYRGKDKPTNVLSFPFEAPPGIEMPLLGDLIICRQVVEQEAQEQSKPLEAHWAHMVVHGSLHLLGYDHIDDDEAEEMESLETEIMLAMGYEDPYIAEKIAE</sequence>
<accession>C0PW97</accession>
<evidence type="ECO:0000255" key="1">
    <source>
        <dbReference type="HAMAP-Rule" id="MF_00009"/>
    </source>
</evidence>
<reference key="1">
    <citation type="journal article" date="2009" name="PLoS ONE">
        <title>Salmonella paratyphi C: genetic divergence from Salmonella choleraesuis and pathogenic convergence with Salmonella typhi.</title>
        <authorList>
            <person name="Liu W.-Q."/>
            <person name="Feng Y."/>
            <person name="Wang Y."/>
            <person name="Zou Q.-H."/>
            <person name="Chen F."/>
            <person name="Guo J.-T."/>
            <person name="Peng Y.-H."/>
            <person name="Jin Y."/>
            <person name="Li Y.-G."/>
            <person name="Hu S.-N."/>
            <person name="Johnston R.N."/>
            <person name="Liu G.-R."/>
            <person name="Liu S.-L."/>
        </authorList>
    </citation>
    <scope>NUCLEOTIDE SEQUENCE [LARGE SCALE GENOMIC DNA]</scope>
    <source>
        <strain>RKS4594</strain>
    </source>
</reference>
<proteinExistence type="inferred from homology"/>
<keyword id="KW-0963">Cytoplasm</keyword>
<keyword id="KW-0255">Endonuclease</keyword>
<keyword id="KW-0378">Hydrolase</keyword>
<keyword id="KW-0479">Metal-binding</keyword>
<keyword id="KW-0540">Nuclease</keyword>
<keyword id="KW-0690">Ribosome biogenesis</keyword>
<keyword id="KW-0698">rRNA processing</keyword>
<keyword id="KW-0862">Zinc</keyword>
<comment type="function">
    <text evidence="1">Single strand-specific metallo-endoribonuclease involved in late-stage 70S ribosome quality control and in maturation of the 3' terminus of the 16S rRNA.</text>
</comment>
<comment type="cofactor">
    <cofactor evidence="1">
        <name>Zn(2+)</name>
        <dbReference type="ChEBI" id="CHEBI:29105"/>
    </cofactor>
    <text evidence="1">Binds 1 zinc ion.</text>
</comment>
<comment type="subcellular location">
    <subcellularLocation>
        <location evidence="1">Cytoplasm</location>
    </subcellularLocation>
</comment>
<comment type="similarity">
    <text evidence="1">Belongs to the endoribonuclease YbeY family.</text>
</comment>
<dbReference type="EC" id="3.1.-.-" evidence="1"/>
<dbReference type="EMBL" id="CP000857">
    <property type="protein sequence ID" value="ACN44860.1"/>
    <property type="molecule type" value="Genomic_DNA"/>
</dbReference>
<dbReference type="RefSeq" id="WP_000084477.1">
    <property type="nucleotide sequence ID" value="NC_012125.1"/>
</dbReference>
<dbReference type="SMR" id="C0PW97"/>
<dbReference type="KEGG" id="sei:SPC_0685"/>
<dbReference type="HOGENOM" id="CLU_106710_0_1_6"/>
<dbReference type="Proteomes" id="UP000001599">
    <property type="component" value="Chromosome"/>
</dbReference>
<dbReference type="GO" id="GO:0005737">
    <property type="term" value="C:cytoplasm"/>
    <property type="evidence" value="ECO:0007669"/>
    <property type="project" value="UniProtKB-SubCell"/>
</dbReference>
<dbReference type="GO" id="GO:0004222">
    <property type="term" value="F:metalloendopeptidase activity"/>
    <property type="evidence" value="ECO:0007669"/>
    <property type="project" value="InterPro"/>
</dbReference>
<dbReference type="GO" id="GO:0004521">
    <property type="term" value="F:RNA endonuclease activity"/>
    <property type="evidence" value="ECO:0007669"/>
    <property type="project" value="UniProtKB-UniRule"/>
</dbReference>
<dbReference type="GO" id="GO:0008270">
    <property type="term" value="F:zinc ion binding"/>
    <property type="evidence" value="ECO:0007669"/>
    <property type="project" value="UniProtKB-UniRule"/>
</dbReference>
<dbReference type="GO" id="GO:0006364">
    <property type="term" value="P:rRNA processing"/>
    <property type="evidence" value="ECO:0007669"/>
    <property type="project" value="UniProtKB-UniRule"/>
</dbReference>
<dbReference type="Gene3D" id="3.40.390.30">
    <property type="entry name" value="Metalloproteases ('zincins'), catalytic domain"/>
    <property type="match status" value="1"/>
</dbReference>
<dbReference type="HAMAP" id="MF_00009">
    <property type="entry name" value="Endoribonucl_YbeY"/>
    <property type="match status" value="1"/>
</dbReference>
<dbReference type="InterPro" id="IPR023091">
    <property type="entry name" value="MetalPrtase_cat_dom_sf_prd"/>
</dbReference>
<dbReference type="InterPro" id="IPR002036">
    <property type="entry name" value="YbeY"/>
</dbReference>
<dbReference type="InterPro" id="IPR020549">
    <property type="entry name" value="YbeY_CS"/>
</dbReference>
<dbReference type="NCBIfam" id="TIGR00043">
    <property type="entry name" value="rRNA maturation RNase YbeY"/>
    <property type="match status" value="1"/>
</dbReference>
<dbReference type="PANTHER" id="PTHR46986">
    <property type="entry name" value="ENDORIBONUCLEASE YBEY, CHLOROPLASTIC"/>
    <property type="match status" value="1"/>
</dbReference>
<dbReference type="PANTHER" id="PTHR46986:SF1">
    <property type="entry name" value="ENDORIBONUCLEASE YBEY, CHLOROPLASTIC"/>
    <property type="match status" value="1"/>
</dbReference>
<dbReference type="Pfam" id="PF02130">
    <property type="entry name" value="YbeY"/>
    <property type="match status" value="1"/>
</dbReference>
<dbReference type="SUPFAM" id="SSF55486">
    <property type="entry name" value="Metalloproteases ('zincins'), catalytic domain"/>
    <property type="match status" value="1"/>
</dbReference>
<dbReference type="PROSITE" id="PS01306">
    <property type="entry name" value="UPF0054"/>
    <property type="match status" value="1"/>
</dbReference>
<gene>
    <name evidence="1" type="primary">ybeY</name>
    <name type="ordered locus">SPC_0685</name>
</gene>